<name>GLMM_STRA1</name>
<evidence type="ECO:0000255" key="1">
    <source>
        <dbReference type="HAMAP-Rule" id="MF_01554"/>
    </source>
</evidence>
<keyword id="KW-0413">Isomerase</keyword>
<keyword id="KW-0460">Magnesium</keyword>
<keyword id="KW-0479">Metal-binding</keyword>
<keyword id="KW-0597">Phosphoprotein</keyword>
<protein>
    <recommendedName>
        <fullName evidence="1">Phosphoglucosamine mutase</fullName>
        <ecNumber evidence="1">5.4.2.10</ecNumber>
    </recommendedName>
</protein>
<accession>Q3K1H1</accession>
<dbReference type="EC" id="5.4.2.10" evidence="1"/>
<dbReference type="EMBL" id="CP000114">
    <property type="protein sequence ID" value="ABA45802.1"/>
    <property type="molecule type" value="Genomic_DNA"/>
</dbReference>
<dbReference type="RefSeq" id="WP_000521427.1">
    <property type="nucleotide sequence ID" value="NC_007432.1"/>
</dbReference>
<dbReference type="SMR" id="Q3K1H1"/>
<dbReference type="KEGG" id="sak:SAK_1010"/>
<dbReference type="HOGENOM" id="CLU_016950_7_0_9"/>
<dbReference type="GO" id="GO:0005829">
    <property type="term" value="C:cytosol"/>
    <property type="evidence" value="ECO:0007669"/>
    <property type="project" value="TreeGrafter"/>
</dbReference>
<dbReference type="GO" id="GO:0000287">
    <property type="term" value="F:magnesium ion binding"/>
    <property type="evidence" value="ECO:0007669"/>
    <property type="project" value="UniProtKB-UniRule"/>
</dbReference>
<dbReference type="GO" id="GO:0008966">
    <property type="term" value="F:phosphoglucosamine mutase activity"/>
    <property type="evidence" value="ECO:0007669"/>
    <property type="project" value="UniProtKB-UniRule"/>
</dbReference>
<dbReference type="GO" id="GO:0004615">
    <property type="term" value="F:phosphomannomutase activity"/>
    <property type="evidence" value="ECO:0007669"/>
    <property type="project" value="TreeGrafter"/>
</dbReference>
<dbReference type="GO" id="GO:0005975">
    <property type="term" value="P:carbohydrate metabolic process"/>
    <property type="evidence" value="ECO:0007669"/>
    <property type="project" value="InterPro"/>
</dbReference>
<dbReference type="GO" id="GO:0009252">
    <property type="term" value="P:peptidoglycan biosynthetic process"/>
    <property type="evidence" value="ECO:0007669"/>
    <property type="project" value="TreeGrafter"/>
</dbReference>
<dbReference type="GO" id="GO:0006048">
    <property type="term" value="P:UDP-N-acetylglucosamine biosynthetic process"/>
    <property type="evidence" value="ECO:0007669"/>
    <property type="project" value="TreeGrafter"/>
</dbReference>
<dbReference type="CDD" id="cd05802">
    <property type="entry name" value="GlmM"/>
    <property type="match status" value="1"/>
</dbReference>
<dbReference type="FunFam" id="3.30.310.50:FF:000001">
    <property type="entry name" value="Phosphoglucosamine mutase"/>
    <property type="match status" value="1"/>
</dbReference>
<dbReference type="FunFam" id="3.40.120.10:FF:000001">
    <property type="entry name" value="Phosphoglucosamine mutase"/>
    <property type="match status" value="1"/>
</dbReference>
<dbReference type="FunFam" id="3.40.120.10:FF:000002">
    <property type="entry name" value="Phosphoglucosamine mutase"/>
    <property type="match status" value="1"/>
</dbReference>
<dbReference type="Gene3D" id="3.40.120.10">
    <property type="entry name" value="Alpha-D-Glucose-1,6-Bisphosphate, subunit A, domain 3"/>
    <property type="match status" value="3"/>
</dbReference>
<dbReference type="Gene3D" id="3.30.310.50">
    <property type="entry name" value="Alpha-D-phosphohexomutase, C-terminal domain"/>
    <property type="match status" value="1"/>
</dbReference>
<dbReference type="HAMAP" id="MF_01554_B">
    <property type="entry name" value="GlmM_B"/>
    <property type="match status" value="1"/>
</dbReference>
<dbReference type="InterPro" id="IPR005844">
    <property type="entry name" value="A-D-PHexomutase_a/b/a-I"/>
</dbReference>
<dbReference type="InterPro" id="IPR016055">
    <property type="entry name" value="A-D-PHexomutase_a/b/a-I/II/III"/>
</dbReference>
<dbReference type="InterPro" id="IPR005845">
    <property type="entry name" value="A-D-PHexomutase_a/b/a-II"/>
</dbReference>
<dbReference type="InterPro" id="IPR005846">
    <property type="entry name" value="A-D-PHexomutase_a/b/a-III"/>
</dbReference>
<dbReference type="InterPro" id="IPR005843">
    <property type="entry name" value="A-D-PHexomutase_C"/>
</dbReference>
<dbReference type="InterPro" id="IPR036900">
    <property type="entry name" value="A-D-PHexomutase_C_sf"/>
</dbReference>
<dbReference type="InterPro" id="IPR016066">
    <property type="entry name" value="A-D-PHexomutase_CS"/>
</dbReference>
<dbReference type="InterPro" id="IPR005841">
    <property type="entry name" value="Alpha-D-phosphohexomutase_SF"/>
</dbReference>
<dbReference type="InterPro" id="IPR006352">
    <property type="entry name" value="GlmM_bact"/>
</dbReference>
<dbReference type="InterPro" id="IPR050060">
    <property type="entry name" value="Phosphoglucosamine_mutase"/>
</dbReference>
<dbReference type="NCBIfam" id="TIGR01455">
    <property type="entry name" value="glmM"/>
    <property type="match status" value="1"/>
</dbReference>
<dbReference type="NCBIfam" id="NF008139">
    <property type="entry name" value="PRK10887.1"/>
    <property type="match status" value="1"/>
</dbReference>
<dbReference type="PANTHER" id="PTHR42946:SF1">
    <property type="entry name" value="PHOSPHOGLUCOMUTASE (ALPHA-D-GLUCOSE-1,6-BISPHOSPHATE-DEPENDENT)"/>
    <property type="match status" value="1"/>
</dbReference>
<dbReference type="PANTHER" id="PTHR42946">
    <property type="entry name" value="PHOSPHOHEXOSE MUTASE"/>
    <property type="match status" value="1"/>
</dbReference>
<dbReference type="Pfam" id="PF02878">
    <property type="entry name" value="PGM_PMM_I"/>
    <property type="match status" value="1"/>
</dbReference>
<dbReference type="Pfam" id="PF02879">
    <property type="entry name" value="PGM_PMM_II"/>
    <property type="match status" value="1"/>
</dbReference>
<dbReference type="Pfam" id="PF02880">
    <property type="entry name" value="PGM_PMM_III"/>
    <property type="match status" value="1"/>
</dbReference>
<dbReference type="Pfam" id="PF00408">
    <property type="entry name" value="PGM_PMM_IV"/>
    <property type="match status" value="1"/>
</dbReference>
<dbReference type="PRINTS" id="PR00509">
    <property type="entry name" value="PGMPMM"/>
</dbReference>
<dbReference type="SUPFAM" id="SSF55957">
    <property type="entry name" value="Phosphoglucomutase, C-terminal domain"/>
    <property type="match status" value="1"/>
</dbReference>
<dbReference type="SUPFAM" id="SSF53738">
    <property type="entry name" value="Phosphoglucomutase, first 3 domains"/>
    <property type="match status" value="3"/>
</dbReference>
<dbReference type="PROSITE" id="PS00710">
    <property type="entry name" value="PGM_PMM"/>
    <property type="match status" value="1"/>
</dbReference>
<gene>
    <name evidence="1" type="primary">glmM</name>
    <name type="ordered locus">SAK_1010</name>
</gene>
<proteinExistence type="inferred from homology"/>
<organism>
    <name type="scientific">Streptococcus agalactiae serotype Ia (strain ATCC 27591 / A909 / CDC SS700)</name>
    <dbReference type="NCBI Taxonomy" id="205921"/>
    <lineage>
        <taxon>Bacteria</taxon>
        <taxon>Bacillati</taxon>
        <taxon>Bacillota</taxon>
        <taxon>Bacilli</taxon>
        <taxon>Lactobacillales</taxon>
        <taxon>Streptococcaceae</taxon>
        <taxon>Streptococcus</taxon>
    </lineage>
</organism>
<comment type="function">
    <text evidence="1">Catalyzes the conversion of glucosamine-6-phosphate to glucosamine-1-phosphate.</text>
</comment>
<comment type="catalytic activity">
    <reaction evidence="1">
        <text>alpha-D-glucosamine 1-phosphate = D-glucosamine 6-phosphate</text>
        <dbReference type="Rhea" id="RHEA:23424"/>
        <dbReference type="ChEBI" id="CHEBI:58516"/>
        <dbReference type="ChEBI" id="CHEBI:58725"/>
        <dbReference type="EC" id="5.4.2.10"/>
    </reaction>
</comment>
<comment type="cofactor">
    <cofactor evidence="1">
        <name>Mg(2+)</name>
        <dbReference type="ChEBI" id="CHEBI:18420"/>
    </cofactor>
    <text evidence="1">Binds 1 Mg(2+) ion per subunit.</text>
</comment>
<comment type="PTM">
    <text evidence="1">Activated by phosphorylation.</text>
</comment>
<comment type="similarity">
    <text evidence="1">Belongs to the phosphohexose mutase family.</text>
</comment>
<reference key="1">
    <citation type="journal article" date="2005" name="Proc. Natl. Acad. Sci. U.S.A.">
        <title>Genome analysis of multiple pathogenic isolates of Streptococcus agalactiae: implications for the microbial 'pan-genome'.</title>
        <authorList>
            <person name="Tettelin H."/>
            <person name="Masignani V."/>
            <person name="Cieslewicz M.J."/>
            <person name="Donati C."/>
            <person name="Medini D."/>
            <person name="Ward N.L."/>
            <person name="Angiuoli S.V."/>
            <person name="Crabtree J."/>
            <person name="Jones A.L."/>
            <person name="Durkin A.S."/>
            <person name="DeBoy R.T."/>
            <person name="Davidsen T.M."/>
            <person name="Mora M."/>
            <person name="Scarselli M."/>
            <person name="Margarit y Ros I."/>
            <person name="Peterson J.D."/>
            <person name="Hauser C.R."/>
            <person name="Sundaram J.P."/>
            <person name="Nelson W.C."/>
            <person name="Madupu R."/>
            <person name="Brinkac L.M."/>
            <person name="Dodson R.J."/>
            <person name="Rosovitz M.J."/>
            <person name="Sullivan S.A."/>
            <person name="Daugherty S.C."/>
            <person name="Haft D.H."/>
            <person name="Selengut J."/>
            <person name="Gwinn M.L."/>
            <person name="Zhou L."/>
            <person name="Zafar N."/>
            <person name="Khouri H."/>
            <person name="Radune D."/>
            <person name="Dimitrov G."/>
            <person name="Watkins K."/>
            <person name="O'Connor K.J."/>
            <person name="Smith S."/>
            <person name="Utterback T.R."/>
            <person name="White O."/>
            <person name="Rubens C.E."/>
            <person name="Grandi G."/>
            <person name="Madoff L.C."/>
            <person name="Kasper D.L."/>
            <person name="Telford J.L."/>
            <person name="Wessels M.R."/>
            <person name="Rappuoli R."/>
            <person name="Fraser C.M."/>
        </authorList>
    </citation>
    <scope>NUCLEOTIDE SEQUENCE [LARGE SCALE GENOMIC DNA]</scope>
    <source>
        <strain>ATCC 27591 / A909 / CDC SS700</strain>
    </source>
</reference>
<feature type="chain" id="PRO_0000147969" description="Phosphoglucosamine mutase">
    <location>
        <begin position="1"/>
        <end position="450"/>
    </location>
</feature>
<feature type="active site" description="Phosphoserine intermediate" evidence="1">
    <location>
        <position position="101"/>
    </location>
</feature>
<feature type="binding site" description="via phosphate group" evidence="1">
    <location>
        <position position="101"/>
    </location>
    <ligand>
        <name>Mg(2+)</name>
        <dbReference type="ChEBI" id="CHEBI:18420"/>
    </ligand>
</feature>
<feature type="binding site" evidence="1">
    <location>
        <position position="240"/>
    </location>
    <ligand>
        <name>Mg(2+)</name>
        <dbReference type="ChEBI" id="CHEBI:18420"/>
    </ligand>
</feature>
<feature type="binding site" evidence="1">
    <location>
        <position position="242"/>
    </location>
    <ligand>
        <name>Mg(2+)</name>
        <dbReference type="ChEBI" id="CHEBI:18420"/>
    </ligand>
</feature>
<feature type="binding site" evidence="1">
    <location>
        <position position="244"/>
    </location>
    <ligand>
        <name>Mg(2+)</name>
        <dbReference type="ChEBI" id="CHEBI:18420"/>
    </ligand>
</feature>
<feature type="modified residue" description="Phosphoserine" evidence="1">
    <location>
        <position position="101"/>
    </location>
</feature>
<sequence>MGKYFGTDGVRGEANVELTPELAFKLGRFGGYVLSQHETDRPRVFVARDTRISGEMLESALIAGLLSVGIEVYKLGVLATPGVSYLVRTEKASAGVMISASHNPALDNGIKFFGSDGFKLDDDRELEIEALLDAKEDTLPRPSAQGLGTLVDYPEGLRKYEKFMESTGIDLEGMKVALDTANGAATASARNIFLDLNADISVIGDQPDGLNINDGVGSTHPEQLQSLVRENGSDIGLAFDGDSDRLIAVDENGEIVDGDKIMFIIGKYLSDKGQLAQNTIVTTVMSNLGFHKALDREGIHKAITAVGDRYVVEEMRKSGYNLGGEQSGHVIIMDYNTTGDGQLTAIQLTKVMKETGKKLSELASEVTIYPQKLVNIRVENNMKDKAMEVPAIAEIIAKMEEEMDGNGRILVRPSGTEPLLRVMAEAPTNEAVDYYVDTIADVVRTEIGLD</sequence>